<protein>
    <recommendedName>
        <fullName evidence="24">Merozoite surface protein 1</fullName>
        <shortName evidence="26">PfMSP-1</shortName>
    </recommendedName>
    <alternativeName>
        <fullName evidence="1">Merozoite surface antigen</fullName>
    </alternativeName>
    <alternativeName>
        <fullName evidence="1">PMMSA</fullName>
    </alternativeName>
    <component>
        <recommendedName>
            <fullName evidence="25">p83 subunit</fullName>
        </recommendedName>
    </component>
    <component>
        <recommendedName>
            <fullName evidence="25">p30 subunit</fullName>
        </recommendedName>
    </component>
    <component>
        <recommendedName>
            <fullName evidence="23">p38 subunit</fullName>
        </recommendedName>
    </component>
    <component>
        <recommendedName>
            <fullName evidence="23">p42 subunit</fullName>
        </recommendedName>
    </component>
    <component>
        <recommendedName>
            <fullName evidence="25">p33 subunit</fullName>
        </recommendedName>
    </component>
    <component>
        <recommendedName>
            <fullName evidence="23">p19 subunit</fullName>
        </recommendedName>
    </component>
</protein>
<comment type="function">
    <text evidence="4 14 17 18 22">During the asexual blood stage, involved in merozoite egress from host erythrocytes possibly via its interaction with the host cytoskeleton protein spectrin resulting in the destabilization of the host cytoskeleton and thus leading to erythrocyte cell membrane rupture (PubMed:26468747). Involved in the binding to host erythrocytes and is required for host erythrocyte invasion (PubMed:12692305, PubMed:21175202, PubMed:25778531, PubMed:36202833).</text>
</comment>
<comment type="function">
    <molecule>p33 subunit</molecule>
    <text evidence="15">By binding to host proinflammatory cytokine S100P may interfere with host immune responses.</text>
</comment>
<comment type="function">
    <molecule>p19 subunit</molecule>
    <text evidence="8 19 29">Involved in merozoite invasion of host erythrocytes (PubMed:1694225, PubMed:29511044). May play a role in the biogenesis and/or function of the food vacuole during the intraerythrocytic development (Probable).</text>
</comment>
<comment type="subunit">
    <text evidence="5 7 9 10 14 16 18 19 20 21">Forms a complex composed of subunits p83, p30, p38, and p42 which remain non-covalently associated; the complex is formed at the merozoite surface prior to egress from host erythrocytes (PubMed:16940297, PubMed:17097159, PubMed:34078606). Forms a complex composed of processed MSP1 subunits, MSP6 subunit p36 and MSP7; the complex is formed at the merozoite surface prior to egress from host erythrocytes (PubMed:16940297). Within the complex, interacts (via subunit p38) with MSP6 subunit p36 and (via subunits p83, p30 and p38) with MSP7 (via subunit p22) (PubMed:16940297, PubMed:17097159, PubMed:18769730). Forms a complex composed of MSP1, MSP6, DBLMSP1 and DBLMSP2 (PubMed:25074930). Within the complex, interacts (via subunit p38) with DBLMSP1 and DBLMSP2 (PubMed:25074930). Forms a complex composed of MSP1, and rhoptry proteins RhopH3, RAP1 and CLAG9/RhopH3 (PubMed:21175202). Within the complex, interacts (via subunits p42 and p19) with RhopH3 (via C-terminus) (PubMed:21175202). Forms a complex composed of MSP1, MSP6, MSP7, MSP9 and MSP3; within the complex, MSP6 and MSP9 mediate the binding to the host erythrocyte (PubMed:29511044). Interacts (via subunits p19 and p42) with MSP9; the interaction is direct; MSP1 subunits p19 or p42, and MSP9 form a co-ligand complex that interacts with host SLC4A1/Band 3 protein (PubMed:14630931). May interact with PFD6 (PubMed:33145997). Interacts with host spectrin (PubMed:26468747, PubMed:34078606).</text>
</comment>
<comment type="subunit">
    <molecule>p83 subunit</molecule>
    <text evidence="17">Interacts with host glycophorin GYPA in a sialic acid-independent manner.</text>
</comment>
<comment type="subunit">
    <molecule>p33 subunit</molecule>
    <text evidence="15">Interacts with host proinflammatory cytokine S100P; the interaction blocks S100P inflammatory and chemotactic activities.</text>
</comment>
<comment type="subunit">
    <molecule>p42 subunit</molecule>
    <text evidence="4">Interacts with host SLC4A1/Band 3 (via 5ABC region) on the host erythrocyte surface in a sialic acid-independent manner.</text>
</comment>
<comment type="subcellular location">
    <subcellularLocation>
        <location evidence="13 14 18">Cell membrane</location>
        <topology evidence="2">Lipid-anchor</topology>
        <topology evidence="2">GPI-anchor</topology>
    </subcellularLocation>
    <subcellularLocation>
        <location evidence="4 5 6 9 14 16 19">Secreted</location>
    </subcellularLocation>
</comment>
<comment type="subcellular location">
    <molecule>p19 subunit</molecule>
    <subcellularLocation>
        <location evidence="8 10">Cell membrane</location>
        <topology evidence="2">Lipid-anchor</topology>
        <topology evidence="2">GPI-anchor</topology>
    </subcellularLocation>
    <subcellularLocation>
        <location evidence="10">Vacuole membrane</location>
        <topology evidence="2">Lipid-anchor</topology>
        <topology evidence="2">GPI-anchor</topology>
    </subcellularLocation>
    <text evidence="8 10">In free merozoites, localizes to the cell membrane (PubMed:1694225, PubMed:18769730). Following merozoite invasion of host erythrocytes, p19 subunit is endocytosed into small food vacuoles in the ring stage and persists throughout the subsequent intra-erythrocytic stages at the surface of the food vacuole where it forms clusters (PubMed:18769730).</text>
</comment>
<comment type="developmental stage">
    <text evidence="4 6 8 9 10 11 13 14 16 18 20">During the asexual blood stage expressed during the trophozoite and schizont stages and in merozoites (at protein level).</text>
</comment>
<comment type="PTM">
    <text evidence="6 7 8 9 10 11 13 18 21">The p190 precursor is cleaved by SUB1 prior to merozoite egress into 4 subunits p83, p30, p38, and p42 which remain non-covalently associated (PubMed:16940297, PubMed:17097159, PubMed:19214190, PubMed:20735778, PubMed:26468747, PubMed:34078606). SUB1-mediated proteolytic cleavage occurs in an orderly manner; the first cleavage occurs at the p30/p38 site, followed by cleavage at the p83/p30 site, in the 3D7 strain a second cleavage occurs at the N-terminus of p83, the last cleavage occurs at the p38/p42 site (PubMed:20735778). The order of cleavage is essential for parasite viability (PubMed:20735778). SUB1-mediated processing is essential for merozoite egress (PubMed:19214190, PubMed:26468747). In a second processing step during erythrocyte invasion, p42 is cleaved by SUB2 into p33 and p19; the latter remains attached to the merozoite surface via its GPI-anchor and is endocytosed during the subsequent ring stage (PubMed:16322767, PubMed:1694225, PubMed:18769730).</text>
</comment>
<comment type="polymorphism">
    <text evidence="13 21">The sequence varies across Plasmodium strains (PubMed:34078606). There are two major dimorphic forms of MSP1, typified by those expressed by the 3D7 and Wellcome P.falciparum isolates (PubMed:20735778).</text>
</comment>
<comment type="biotechnology">
    <molecule>p42 subunit</molecule>
    <text evidence="12">Potential target for heparin-based inhibitors. Binding of heparin-like molecules to p42 subunit inhibits parasite invasion of host erythrocytes.</text>
</comment>
<comment type="biotechnology">
    <molecule>p19 subunit</molecule>
    <text evidence="19 22">Potential candidate for the development of parasite blood stage vaccines (PubMed:29511044, PubMed:36202833). In vitro, neutralizing antibodies against strain-conserved regions of the p19 subunit are capable of inhibiting parasite growth in host erythrocytes (PubMed:36202833).</text>
</comment>
<reference evidence="31" key="1">
    <citation type="journal article" date="2002" name="Nature">
        <title>Genome sequence of the human malaria parasite Plasmodium falciparum.</title>
        <authorList>
            <person name="Gardner M.J."/>
            <person name="Hall N."/>
            <person name="Fung E."/>
            <person name="White O."/>
            <person name="Berriman M."/>
            <person name="Hyman R.W."/>
            <person name="Carlton J.M."/>
            <person name="Pain A."/>
            <person name="Nelson K.E."/>
            <person name="Bowman S."/>
            <person name="Paulsen I.T."/>
            <person name="James K.D."/>
            <person name="Eisen J.A."/>
            <person name="Rutherford K.M."/>
            <person name="Salzberg S.L."/>
            <person name="Craig A."/>
            <person name="Kyes S."/>
            <person name="Chan M.-S."/>
            <person name="Nene V."/>
            <person name="Shallom S.J."/>
            <person name="Suh B."/>
            <person name="Peterson J."/>
            <person name="Angiuoli S."/>
            <person name="Pertea M."/>
            <person name="Allen J."/>
            <person name="Selengut J."/>
            <person name="Haft D."/>
            <person name="Mather M.W."/>
            <person name="Vaidya A.B."/>
            <person name="Martin D.M.A."/>
            <person name="Fairlamb A.H."/>
            <person name="Fraunholz M.J."/>
            <person name="Roos D.S."/>
            <person name="Ralph S.A."/>
            <person name="McFadden G.I."/>
            <person name="Cummings L.M."/>
            <person name="Subramanian G.M."/>
            <person name="Mungall C."/>
            <person name="Venter J.C."/>
            <person name="Carucci D.J."/>
            <person name="Hoffman S.L."/>
            <person name="Newbold C."/>
            <person name="Davis R.W."/>
            <person name="Fraser C.M."/>
            <person name="Barrell B.G."/>
        </authorList>
    </citation>
    <scope>NUCLEOTIDE SEQUENCE [LARGE SCALE GENOMIC DNA]</scope>
    <source>
        <strain evidence="31">3D7</strain>
    </source>
</reference>
<reference evidence="31" key="2">
    <citation type="journal article" date="2002" name="Nature">
        <title>Sequence of Plasmodium falciparum chromosomes 1, 3-9 and 13.</title>
        <authorList>
            <person name="Hall N."/>
            <person name="Pain A."/>
            <person name="Berriman M."/>
            <person name="Churcher C.M."/>
            <person name="Harris B."/>
            <person name="Harris D."/>
            <person name="Mungall K.L."/>
            <person name="Bowman S."/>
            <person name="Atkin R."/>
            <person name="Baker S."/>
            <person name="Barron A."/>
            <person name="Brooks K."/>
            <person name="Buckee C.O."/>
            <person name="Burrows C."/>
            <person name="Cherevach I."/>
            <person name="Chillingworth C."/>
            <person name="Chillingworth T."/>
            <person name="Christodoulou Z."/>
            <person name="Clark L."/>
            <person name="Clark R."/>
            <person name="Corton C."/>
            <person name="Cronin A."/>
            <person name="Davies R.M."/>
            <person name="Davis P."/>
            <person name="Dear P."/>
            <person name="Dearden F."/>
            <person name="Doggett J."/>
            <person name="Feltwell T."/>
            <person name="Goble A."/>
            <person name="Goodhead I."/>
            <person name="Gwilliam R."/>
            <person name="Hamlin N."/>
            <person name="Hance Z."/>
            <person name="Harper D."/>
            <person name="Hauser H."/>
            <person name="Hornsby T."/>
            <person name="Holroyd S."/>
            <person name="Horrocks P."/>
            <person name="Humphray S."/>
            <person name="Jagels K."/>
            <person name="James K.D."/>
            <person name="Johnson D."/>
            <person name="Kerhornou A."/>
            <person name="Knights A."/>
            <person name="Konfortov B."/>
            <person name="Kyes S."/>
            <person name="Larke N."/>
            <person name="Lawson D."/>
            <person name="Lennard N."/>
            <person name="Line A."/>
            <person name="Maddison M."/>
            <person name="Mclean J."/>
            <person name="Mooney P."/>
            <person name="Moule S."/>
            <person name="Murphy L."/>
            <person name="Oliver K."/>
            <person name="Ormond D."/>
            <person name="Price C."/>
            <person name="Quail M.A."/>
            <person name="Rabbinowitsch E."/>
            <person name="Rajandream M.A."/>
            <person name="Rutter S."/>
            <person name="Rutherford K.M."/>
            <person name="Sanders M."/>
            <person name="Simmonds M."/>
            <person name="Seeger K."/>
            <person name="Sharp S."/>
            <person name="Smith R."/>
            <person name="Squares R."/>
            <person name="Squares S."/>
            <person name="Stevens K."/>
            <person name="Taylor K."/>
            <person name="Tivey A."/>
            <person name="Unwin L."/>
            <person name="Whitehead S."/>
            <person name="Woodward J.R."/>
            <person name="Sulston J.E."/>
            <person name="Craig A."/>
            <person name="Newbold C."/>
            <person name="Barrell B.G."/>
        </authorList>
    </citation>
    <scope>NUCLEOTIDE SEQUENCE [LARGE SCALE GENOMIC DNA]</scope>
    <source>
        <strain evidence="31">3D7</strain>
    </source>
</reference>
<reference evidence="28" key="3">
    <citation type="journal article" date="1990" name="J. Exp. Med.">
        <title>A single fragment of a malaria merozoite surface protein remains on the parasite during red cell invasion and is the target of invasion-inhibiting antibodies.</title>
        <authorList>
            <person name="Blackman M.J."/>
            <person name="Heidrich H.G."/>
            <person name="Donachie S."/>
            <person name="McBride J.S."/>
            <person name="Holder A.A."/>
        </authorList>
    </citation>
    <scope>FUNCTION</scope>
    <scope>SUBCELLULAR LOCATION</scope>
    <scope>DEVELOPMENTAL STAGE</scope>
    <scope>PROTEOLYTIC CLEAVAGE</scope>
    <source>
        <strain evidence="24">FcB1 / Columbia</strain>
    </source>
</reference>
<reference evidence="28" key="4">
    <citation type="journal article" date="2003" name="Proc. Natl. Acad. Sci. U.S.A.">
        <title>Band 3 is a host receptor binding merozoite surface protein 1 during the Plasmodium falciparum invasion of erythrocytes.</title>
        <authorList>
            <person name="Goel V.K."/>
            <person name="Li X."/>
            <person name="Chen H."/>
            <person name="Liu S.C."/>
            <person name="Chishti A.H."/>
            <person name="Oh S.S."/>
        </authorList>
    </citation>
    <scope>FUNCTION</scope>
    <scope>INTERACTION WITH HUMAN SLC4A1</scope>
    <scope>SUBCELLULAR LOCATION</scope>
    <scope>DEVELOPMENTAL STAGE</scope>
</reference>
<reference evidence="28" key="5">
    <citation type="journal article" date="2004" name="J. Biol. Chem.">
        <title>A co-ligand complex anchors Plasmodium falciparum merozoites to the erythrocyte invasion receptor band 3.</title>
        <authorList>
            <person name="Li X."/>
            <person name="Chen H."/>
            <person name="Oo T.H."/>
            <person name="Daly T.M."/>
            <person name="Bergman L.W."/>
            <person name="Liu S.C."/>
            <person name="Chishti A.H."/>
            <person name="Oh S.S."/>
        </authorList>
    </citation>
    <scope>INTERACTION WITH MSP9</scope>
    <scope>SUBCELLULAR LOCATION</scope>
</reference>
<reference evidence="28" key="6">
    <citation type="journal article" date="2005" name="PLoS Pathog.">
        <title>Molecular identification of a malaria merozoite surface sheddase.</title>
        <authorList>
            <person name="Harris P.K."/>
            <person name="Yeoh S."/>
            <person name="Dluzewski A.R."/>
            <person name="O'Donnell R.A."/>
            <person name="Withers-Martinez C."/>
            <person name="Hackett F."/>
            <person name="Bannister L.H."/>
            <person name="Mitchell G.H."/>
            <person name="Blackman M.J."/>
        </authorList>
    </citation>
    <scope>SUBCELLULAR LOCATION</scope>
    <scope>DEVELOPMENTAL STAGE</scope>
    <scope>PROTEOLYTIC CLEAVAGE</scope>
</reference>
<reference evidence="28" key="7">
    <citation type="journal article" date="2006" name="J. Biol. Chem.">
        <title>Interactions between merozoite surface proteins 1, 6, and 7 of the malaria parasite Plasmodium falciparum.</title>
        <authorList>
            <person name="Kauth C.W."/>
            <person name="Woehlbier U."/>
            <person name="Kern M."/>
            <person name="Mekonnen Z."/>
            <person name="Lutz R."/>
            <person name="Muecke N."/>
            <person name="Langowski J."/>
            <person name="Bujard H."/>
        </authorList>
    </citation>
    <scope>SUBUNIT</scope>
    <scope>IDENTIFICATION IN A COMPLEX WITH MSP6 AND MSP7</scope>
    <scope>PROTEOLYTIC CLEAVAGE</scope>
</reference>
<reference evidence="28" key="8">
    <citation type="journal article" date="2007" name="Mol. Biochem. Parasitol.">
        <title>Extensive proteolytic processing of the malaria parasite merozoite surface protein 7 during biosynthesis and parasite release from erythrocytes.</title>
        <authorList>
            <person name="Pachebat J.A."/>
            <person name="Kadekoppala M."/>
            <person name="Grainger M."/>
            <person name="Dluzewski A.R."/>
            <person name="Gunaratne R.S."/>
            <person name="Scott-Finnigan T.J."/>
            <person name="Ogun S.A."/>
            <person name="Ling I.T."/>
            <person name="Bannister L.H."/>
            <person name="Taylor H.M."/>
            <person name="Mitchell G.H."/>
            <person name="Holder A.A."/>
        </authorList>
    </citation>
    <scope>SUBUNIT</scope>
    <scope>IDENTIFICATION IN A COMPLEX WITH MSP6 AND MSP7</scope>
    <scope>SUBCELLULAR LOCATION</scope>
    <scope>DEVELOPMENTAL STAGE</scope>
    <scope>PROTEOLYTIC CLEAVAGE</scope>
</reference>
<reference evidence="28" key="9">
    <citation type="journal article" date="2008" name="PLoS ONE">
        <title>Formation of the food vacuole in Plasmodium falciparum: a potential role for the 19 kDa fragment of merozoite surface protein 1 (MSP1(19)).</title>
        <authorList>
            <person name="Dluzewski A.R."/>
            <person name="Ling I.T."/>
            <person name="Hopkins J.M."/>
            <person name="Grainger M."/>
            <person name="Margos G."/>
            <person name="Mitchell G.H."/>
            <person name="Holder A.A."/>
            <person name="Bannister L.H."/>
        </authorList>
    </citation>
    <scope>FUNCTION</scope>
    <scope>INTERACTION WITH MSP7</scope>
    <scope>SUBCELLULAR LOCATION</scope>
    <scope>DEVELOPMENTAL STAGE</scope>
    <scope>PROTEOLYTIC CLEAVAGE</scope>
</reference>
<reference evidence="28" key="10">
    <citation type="journal article" date="2009" name="EMBO J.">
        <title>A multifunctional serine protease primes the malaria parasite for red blood cell invasion.</title>
        <authorList>
            <person name="Koussis K."/>
            <person name="Withers-Martinez C."/>
            <person name="Yeoh S."/>
            <person name="Child M."/>
            <person name="Hackett F."/>
            <person name="Knuepfer E."/>
            <person name="Juliano L."/>
            <person name="Woehlbier U."/>
            <person name="Bujard H."/>
            <person name="Blackman M.J."/>
        </authorList>
    </citation>
    <scope>DEVELOPMENTAL STAGE</scope>
    <scope>PROTEOLYTIC CLEAVAGE</scope>
</reference>
<reference evidence="28" key="11">
    <citation type="journal article" date="2010" name="Blood">
        <title>Interactions with heparin-like molecules during erythrocyte invasion by Plasmodium falciparum merozoites.</title>
        <authorList>
            <person name="Boyle M.J."/>
            <person name="Richards J.S."/>
            <person name="Gilson P.R."/>
            <person name="Chai W."/>
            <person name="Beeson J.G."/>
        </authorList>
    </citation>
    <scope>BIOTECHNOLOGY</scope>
</reference>
<reference evidence="28" key="12">
    <citation type="journal article" date="2010" name="Mol. Microbiol.">
        <title>Regulated maturation of malaria merozoite surface protein-1 is essential for parasite growth.</title>
        <authorList>
            <person name="Child M.A."/>
            <person name="Epp C."/>
            <person name="Bujard H."/>
            <person name="Blackman M.J."/>
        </authorList>
    </citation>
    <scope>SUBCELLULAR LOCATION</scope>
    <scope>DEVELOPMENTAL STAGE</scope>
    <scope>PROTEOLYTIC CLEAVAGE</scope>
</reference>
<reference evidence="28" key="13">
    <citation type="journal article" date="2011" name="J. Proteome Res.">
        <title>Proteome analysis reveals a large merozoite surface protein-1 associated complex on the Plasmodium falciparum merozoite surface.</title>
        <authorList>
            <person name="Ranjan R."/>
            <person name="Chugh M."/>
            <person name="Kumar S."/>
            <person name="Singh S."/>
            <person name="Kanodia S."/>
            <person name="Hossain M.J."/>
            <person name="Korde R."/>
            <person name="Grover A."/>
            <person name="Dhawan S."/>
            <person name="Chauhan V.S."/>
            <person name="Reddy V.S."/>
            <person name="Mohmmed A."/>
            <person name="Malhotra P."/>
        </authorList>
    </citation>
    <scope>FUNCTION</scope>
    <scope>IDENTIFICATION IN A COMPLEX WITH RHOPH3; RAP1 AND CLAG9</scope>
    <scope>INTERACTION WITH RHOPH3</scope>
    <scope>SUBCELLULAR LOCATION</scope>
    <scope>DEVELOPMENTAL STAGE</scope>
    <scope>IDENTIFICATION BY MASS SPECTROMETRY</scope>
</reference>
<reference evidence="28" key="14">
    <citation type="journal article" date="2012" name="Proc. Natl. Acad. Sci. U.S.A.">
        <title>Plasmodium falciparum merozoite surface protein 1 blocks the proinflammatory protein S100P.</title>
        <authorList>
            <person name="Waisberg M."/>
            <person name="Cerqueira G.C."/>
            <person name="Yager S.B."/>
            <person name="Francischetti I.M."/>
            <person name="Lu J."/>
            <person name="Gera N."/>
            <person name="Srinivasan P."/>
            <person name="Miura K."/>
            <person name="Rada B."/>
            <person name="Lukszo J."/>
            <person name="Barbian K.D."/>
            <person name="Leto T.L."/>
            <person name="Porcella S.F."/>
            <person name="Narum D.L."/>
            <person name="El-Sayed N."/>
            <person name="Miller L.H."/>
            <person name="Pierce S.K."/>
        </authorList>
    </citation>
    <scope>FUNCTION</scope>
    <scope>INTERACTION WITH HUMAN S100P</scope>
</reference>
<reference evidence="28" key="15">
    <citation type="journal article" date="2014" name="J. Biol. Chem.">
        <title>The merozoite surface protein 1 complex is a platform for binding to human erythrocytes by Plasmodium falciparum.</title>
        <authorList>
            <person name="Lin C.S."/>
            <person name="Uboldi A.D."/>
            <person name="Marapana D."/>
            <person name="Czabotar P.E."/>
            <person name="Epp C."/>
            <person name="Bujard H."/>
            <person name="Taylor N.L."/>
            <person name="Perugini M.A."/>
            <person name="Hodder A.N."/>
            <person name="Cowman A.F."/>
        </authorList>
    </citation>
    <scope>INDENTIFICATION IN A COMPLEX WITH MSP6 DBLMSP1 AND DBLMSP2</scope>
    <scope>SUBCELLULAR LOCATION</scope>
    <scope>DEVELOPMENTAL STAGE</scope>
</reference>
<reference evidence="28" key="16">
    <citation type="journal article" date="2015" name="Blood">
        <title>Merozoite surface protein 1 recognition of host glycophorin A mediates malaria parasite invasion of red blood cells.</title>
        <authorList>
            <person name="Baldwin M.R."/>
            <person name="Li X."/>
            <person name="Hanada T."/>
            <person name="Liu S.C."/>
            <person name="Chishti A.H."/>
        </authorList>
    </citation>
    <scope>FUNCTION</scope>
    <scope>INTERACTION WITH HUMAN GYPA</scope>
    <source>
        <strain evidence="27">FCR3</strain>
    </source>
</reference>
<reference evidence="28" key="17">
    <citation type="journal article" date="2015" name="Cell Host Microbe">
        <title>Processing of Plasmodium falciparum Merozoite Surface Protein MSP1 Activates a Spectrin-Binding Function Enabling Parasite Egress from RBCs.</title>
        <authorList>
            <person name="Das S."/>
            <person name="Hertrich N."/>
            <person name="Perrin A.J."/>
            <person name="Withers-Martinez C."/>
            <person name="Collins C.R."/>
            <person name="Jones M.L."/>
            <person name="Watermeyer J.M."/>
            <person name="Fobes E.T."/>
            <person name="Martin S.R."/>
            <person name="Saibil H.R."/>
            <person name="Wright G.J."/>
            <person name="Treeck M."/>
            <person name="Epp C."/>
            <person name="Blackman M.J."/>
        </authorList>
    </citation>
    <scope>FUNCTION</scope>
    <scope>INTERACTION WITH HUMAN SPECTRIN</scope>
    <scope>SUBCELLULAR LOCATION</scope>
    <scope>DEVELOPMENTAL STAGE</scope>
    <scope>PROTEOLYTIC CLEAVAGE</scope>
    <scope>MUTAGENESIS OF 1254-ASP--ILE-1720 AND 1277-ILE--ILE-1720</scope>
</reference>
<reference evidence="28" key="18">
    <citation type="journal article" date="2018" name="Biochem. J.">
        <title>Protein-protein interaction studies reveal the Plasmodium falciparum merozoite surface protein-1 region involved in a complex formation that binds to human erythrocytes.</title>
        <authorList>
            <person name="Paul G."/>
            <person name="Deshmukh A."/>
            <person name="Kumar Chourasia B."/>
            <person name="Kalamuddin M."/>
            <person name="Panda A."/>
            <person name="Kumar Singh S."/>
            <person name="Gupta P.K."/>
            <person name="Mohmmed A."/>
            <person name="Chauhan V.S."/>
            <person name="Theisen M."/>
            <person name="Malhotra P."/>
        </authorList>
    </citation>
    <scope>FUNCTION</scope>
    <scope>IDENTIFICATION IN A COMPLEX WITH MSP6</scope>
    <scope>MSP7</scope>
    <scope>MSP9 AND MSP3</scope>
    <scope>SUBCELLULAR LOCATION</scope>
    <scope>BIOTECHNOLOGY</scope>
</reference>
<reference evidence="28" key="19">
    <citation type="journal article" date="2022" name="FEBS Open Bio">
        <title>Prefoldin subunit 6 of Plasmodium falciparum binds merozoite surface protein-1.</title>
        <authorList>
            <person name="Kumar V."/>
            <person name="Shoaib R."/>
            <person name="Behl A."/>
            <person name="Munjal A."/>
            <person name="Abid M."/>
            <person name="Singh S."/>
        </authorList>
    </citation>
    <scope>INTERACTION WITH PFD6</scope>
    <scope>DEVELOPMENTAL STAGE</scope>
</reference>
<reference evidence="32 33 34 35 36 37 38 39" key="20">
    <citation type="journal article" date="2021" name="Sci. Adv.">
        <title>Structure of the merozoite surface protein 1 from Plasmodium falciparum.</title>
        <authorList>
            <person name="Dijkman P.M."/>
            <person name="Marzluf T."/>
            <person name="Zhang Y."/>
            <person name="Chang S.S."/>
            <person name="Helm D."/>
            <person name="Lanzer M."/>
            <person name="Bujard H."/>
            <person name="Kudryashev M."/>
        </authorList>
    </citation>
    <scope>STRUCTURE BY ELECTRON MICROSCOPY (3.10 ANGSTROMS) OF 737-910 AND 911-1326</scope>
    <scope>SUBUNIT</scope>
    <scope>INTERACTION WITH HUMAN SPECTRIN</scope>
    <scope>POLYMORPHISM</scope>
    <scope>PROTEOLYTIC CLEAVAGE</scope>
</reference>
<reference evidence="40 41 42" key="21">
    <citation type="journal article" date="2022" name="Nat. Commun.">
        <title>Neutralizing and interfering human antibodies define the structural and mechanistic basis for antigenic diversion.</title>
        <authorList>
            <person name="Patel P.N."/>
            <person name="Dickey T.H."/>
            <person name="Hopp C.S."/>
            <person name="Diouf A."/>
            <person name="Tang W.K."/>
            <person name="Long C.A."/>
            <person name="Miura K."/>
            <person name="Crompton P.D."/>
            <person name="Tolia N.H."/>
        </authorList>
    </citation>
    <scope>X-RAY CRYSTALLOGRAPHY (1.90 ANGSTROMS) OF 1607-1699 IN COMPLEX WITH ANTIBODIES</scope>
    <scope>FUNCTION</scope>
    <scope>BIOTECHNOLOGY</scope>
    <scope>DISULFIDE BONDS</scope>
</reference>
<accession>Q8I0U8</accession>
<keyword id="KW-0002">3D-structure</keyword>
<keyword id="KW-1003">Cell membrane</keyword>
<keyword id="KW-0175">Coiled coil</keyword>
<keyword id="KW-1015">Disulfide bond</keyword>
<keyword id="KW-0245">EGF-like domain</keyword>
<keyword id="KW-0325">Glycoprotein</keyword>
<keyword id="KW-0336">GPI-anchor</keyword>
<keyword id="KW-0449">Lipoprotein</keyword>
<keyword id="KW-0461">Malaria</keyword>
<keyword id="KW-0472">Membrane</keyword>
<keyword id="KW-0477">Merozoite</keyword>
<keyword id="KW-1185">Reference proteome</keyword>
<keyword id="KW-0677">Repeat</keyword>
<keyword id="KW-0964">Secreted</keyword>
<keyword id="KW-0732">Signal</keyword>
<keyword id="KW-0926">Vacuole</keyword>
<organism evidence="31">
    <name type="scientific">Plasmodium falciparum (isolate 3D7)</name>
    <dbReference type="NCBI Taxonomy" id="36329"/>
    <lineage>
        <taxon>Eukaryota</taxon>
        <taxon>Sar</taxon>
        <taxon>Alveolata</taxon>
        <taxon>Apicomplexa</taxon>
        <taxon>Aconoidasida</taxon>
        <taxon>Haemosporida</taxon>
        <taxon>Plasmodiidae</taxon>
        <taxon>Plasmodium</taxon>
        <taxon>Plasmodium (Laverania)</taxon>
    </lineage>
</organism>
<dbReference type="EMBL" id="AL844508">
    <property type="protein sequence ID" value="CAD51981.1"/>
    <property type="molecule type" value="Genomic_DNA"/>
</dbReference>
<dbReference type="RefSeq" id="XP_001352170.1">
    <property type="nucleotide sequence ID" value="XM_001352134.1"/>
</dbReference>
<dbReference type="PDB" id="6ZBC">
    <property type="method" value="EM"/>
    <property type="resolution" value="3.10 A"/>
    <property type="chains" value="B=737-910, C=911-1326"/>
</dbReference>
<dbReference type="PDB" id="6ZBD">
    <property type="method" value="EM"/>
    <property type="resolution" value="3.21 A"/>
    <property type="chains" value="B=737-910, C=911-1326"/>
</dbReference>
<dbReference type="PDB" id="6ZBE">
    <property type="method" value="EM"/>
    <property type="resolution" value="3.30 A"/>
    <property type="chains" value="B=737-910, C=911-1326"/>
</dbReference>
<dbReference type="PDB" id="6ZBF">
    <property type="method" value="EM"/>
    <property type="resolution" value="3.20 A"/>
    <property type="chains" value="B=737-910, C=911-1326"/>
</dbReference>
<dbReference type="PDB" id="6ZBG">
    <property type="method" value="EM"/>
    <property type="resolution" value="3.20 A"/>
    <property type="chains" value="B=737-910, C=911-1326"/>
</dbReference>
<dbReference type="PDB" id="6ZBH">
    <property type="method" value="EM"/>
    <property type="resolution" value="3.60 A"/>
    <property type="chains" value="B=737-910, C=911-1326"/>
</dbReference>
<dbReference type="PDB" id="6ZBJ">
    <property type="method" value="EM"/>
    <property type="resolution" value="3.30 A"/>
    <property type="chains" value="A/C=20-910, B/D=911-1702"/>
</dbReference>
<dbReference type="PDB" id="6ZBL">
    <property type="method" value="EM"/>
    <property type="resolution" value="3.60 A"/>
    <property type="chains" value="A/C=20-910, B/D=911-1702"/>
</dbReference>
<dbReference type="PDB" id="8DFG">
    <property type="method" value="X-ray"/>
    <property type="resolution" value="2.00 A"/>
    <property type="chains" value="A/B=1607-1699"/>
</dbReference>
<dbReference type="PDB" id="8DFH">
    <property type="method" value="X-ray"/>
    <property type="resolution" value="2.30 A"/>
    <property type="chains" value="A=1607-1699"/>
</dbReference>
<dbReference type="PDB" id="8DFI">
    <property type="method" value="X-ray"/>
    <property type="resolution" value="1.90 A"/>
    <property type="chains" value="A=1607-1699"/>
</dbReference>
<dbReference type="PDBsum" id="6ZBC"/>
<dbReference type="PDBsum" id="6ZBD"/>
<dbReference type="PDBsum" id="6ZBE"/>
<dbReference type="PDBsum" id="6ZBF"/>
<dbReference type="PDBsum" id="6ZBG"/>
<dbReference type="PDBsum" id="6ZBH"/>
<dbReference type="PDBsum" id="6ZBJ"/>
<dbReference type="PDBsum" id="6ZBL"/>
<dbReference type="PDBsum" id="8DFG"/>
<dbReference type="PDBsum" id="8DFH"/>
<dbReference type="PDBsum" id="8DFI"/>
<dbReference type="SMR" id="Q8I0U8"/>
<dbReference type="FunCoup" id="Q8I0U8">
    <property type="interactions" value="6"/>
</dbReference>
<dbReference type="IntAct" id="Q8I0U8">
    <property type="interactions" value="43"/>
</dbReference>
<dbReference type="STRING" id="36329.Q8I0U8"/>
<dbReference type="SwissPalm" id="Q8I0U8"/>
<dbReference type="PaxDb" id="5833-PFI1475w"/>
<dbReference type="ABCD" id="Q8I0U8">
    <property type="antibodies" value="5 sequenced antibodies"/>
</dbReference>
<dbReference type="EnsemblProtists" id="CAD51981">
    <property type="protein sequence ID" value="CAD51981"/>
    <property type="gene ID" value="PF3D7_0930300"/>
</dbReference>
<dbReference type="GeneID" id="813575"/>
<dbReference type="KEGG" id="pfa:PF3D7_0930300"/>
<dbReference type="VEuPathDB" id="PlasmoDB:PF3D7_0930300"/>
<dbReference type="HOGENOM" id="CLU_238350_0_0_1"/>
<dbReference type="InParanoid" id="Q8I0U8"/>
<dbReference type="OMA" id="KLNDMCA"/>
<dbReference type="OrthoDB" id="10045365at2759"/>
<dbReference type="PhylomeDB" id="Q8I0U8"/>
<dbReference type="Proteomes" id="UP000001450">
    <property type="component" value="Chromosome 9"/>
</dbReference>
<dbReference type="GO" id="GO:0005576">
    <property type="term" value="C:extracellular region"/>
    <property type="evidence" value="ECO:0000314"/>
    <property type="project" value="UniProtKB"/>
</dbReference>
<dbReference type="GO" id="GO:0005886">
    <property type="term" value="C:plasma membrane"/>
    <property type="evidence" value="ECO:0000314"/>
    <property type="project" value="UniProtKB"/>
</dbReference>
<dbReference type="GO" id="GO:0098552">
    <property type="term" value="C:side of membrane"/>
    <property type="evidence" value="ECO:0007669"/>
    <property type="project" value="UniProtKB-KW"/>
</dbReference>
<dbReference type="GO" id="GO:0005774">
    <property type="term" value="C:vacuolar membrane"/>
    <property type="evidence" value="ECO:0007669"/>
    <property type="project" value="UniProtKB-SubCell"/>
</dbReference>
<dbReference type="GO" id="GO:0085017">
    <property type="term" value="P:entry into host cell by a symbiont-containing vacuole"/>
    <property type="evidence" value="ECO:0000314"/>
    <property type="project" value="UniProtKB"/>
</dbReference>
<dbReference type="Gene3D" id="2.10.25.10">
    <property type="entry name" value="Laminin"/>
    <property type="match status" value="2"/>
</dbReference>
<dbReference type="InterPro" id="IPR010901">
    <property type="entry name" value="MSP1_C"/>
</dbReference>
<dbReference type="InterPro" id="IPR024730">
    <property type="entry name" value="MSP1_EGF_1"/>
</dbReference>
<dbReference type="Pfam" id="PF12946">
    <property type="entry name" value="EGF_MSP1_1"/>
    <property type="match status" value="1"/>
</dbReference>
<dbReference type="Pfam" id="PF07462">
    <property type="entry name" value="MSP1_C"/>
    <property type="match status" value="1"/>
</dbReference>
<dbReference type="SUPFAM" id="SSF57196">
    <property type="entry name" value="EGF/Laminin"/>
    <property type="match status" value="2"/>
</dbReference>
<proteinExistence type="evidence at protein level"/>
<name>MSP1_PLAF7</name>
<feature type="signal peptide" evidence="2">
    <location>
        <begin position="1"/>
        <end position="19"/>
    </location>
</feature>
<feature type="chain" id="PRO_5004307897" description="Merozoite surface protein 1" evidence="2">
    <location>
        <begin position="20"/>
        <end position="1694"/>
    </location>
</feature>
<feature type="chain" id="PRO_0000459240" description="p83 subunit" evidence="11">
    <location>
        <begin position="64"/>
        <end position="722"/>
    </location>
</feature>
<feature type="chain" id="PRO_0000459241" description="p30 subunit" evidence="11">
    <location>
        <begin position="723"/>
        <end position="910"/>
    </location>
</feature>
<feature type="chain" id="PRO_0000459242" description="p38 subunit" evidence="11">
    <location>
        <begin position="911"/>
        <end position="1326"/>
    </location>
</feature>
<feature type="chain" id="PRO_0000459243" description="p42 subunit" evidence="11">
    <location>
        <begin position="1327"/>
        <end position="1699"/>
    </location>
</feature>
<feature type="chain" id="PRO_0000459244" description="p33 subunit" evidence="13">
    <location>
        <begin position="1327"/>
        <end position="1606"/>
    </location>
</feature>
<feature type="chain" id="PRO_0000459245" description="p19 subunit" evidence="13">
    <location>
        <begin position="1607"/>
        <end position="1699"/>
    </location>
</feature>
<feature type="propeptide" id="PRO_0000459246" description="Removed in mature form" evidence="2">
    <location>
        <begin position="1700"/>
        <end position="1720"/>
    </location>
</feature>
<feature type="domain" description="EGF-like 1" evidence="22">
    <location>
        <begin position="1611"/>
        <end position="1651"/>
    </location>
</feature>
<feature type="domain" description="EGF-like 2" evidence="22">
    <location>
        <begin position="1652"/>
        <end position="1693"/>
    </location>
</feature>
<feature type="region of interest" description="Disordered" evidence="3">
    <location>
        <begin position="63"/>
        <end position="137"/>
    </location>
</feature>
<feature type="region of interest" description="Disordered" evidence="3">
    <location>
        <begin position="723"/>
        <end position="775"/>
    </location>
</feature>
<feature type="region of interest" description="Disordered" evidence="3">
    <location>
        <begin position="908"/>
        <end position="955"/>
    </location>
</feature>
<feature type="region of interest" description="Disordered" evidence="3">
    <location>
        <begin position="1249"/>
        <end position="1278"/>
    </location>
</feature>
<feature type="region of interest" description="Disordered" evidence="3">
    <location>
        <begin position="1470"/>
        <end position="1491"/>
    </location>
</feature>
<feature type="coiled-coil region" evidence="2">
    <location>
        <begin position="474"/>
        <end position="519"/>
    </location>
</feature>
<feature type="compositionally biased region" description="Low complexity" evidence="3">
    <location>
        <begin position="63"/>
        <end position="112"/>
    </location>
</feature>
<feature type="compositionally biased region" description="Polar residues" evidence="3">
    <location>
        <begin position="113"/>
        <end position="122"/>
    </location>
</feature>
<feature type="compositionally biased region" description="Low complexity" evidence="3">
    <location>
        <begin position="123"/>
        <end position="132"/>
    </location>
</feature>
<feature type="compositionally biased region" description="Acidic residues" evidence="3">
    <location>
        <begin position="743"/>
        <end position="753"/>
    </location>
</feature>
<feature type="compositionally biased region" description="Low complexity" evidence="3">
    <location>
        <begin position="908"/>
        <end position="946"/>
    </location>
</feature>
<feature type="compositionally biased region" description="Polar residues" evidence="3">
    <location>
        <begin position="1264"/>
        <end position="1278"/>
    </location>
</feature>
<feature type="compositionally biased region" description="Pro residues" evidence="3">
    <location>
        <begin position="1475"/>
        <end position="1484"/>
    </location>
</feature>
<feature type="lipid moiety-binding region" description="GPI-anchor amidated serine" evidence="2">
    <location>
        <position position="1699"/>
    </location>
</feature>
<feature type="disulfide bond" evidence="22 40 41 42">
    <location>
        <begin position="1613"/>
        <end position="1624"/>
    </location>
</feature>
<feature type="disulfide bond" evidence="22 40 41 42">
    <location>
        <begin position="1618"/>
        <end position="1634"/>
    </location>
</feature>
<feature type="disulfide bond" evidence="22 40 41 42">
    <location>
        <begin position="1636"/>
        <end position="1647"/>
    </location>
</feature>
<feature type="disulfide bond" evidence="22 40 41 42">
    <location>
        <begin position="1655"/>
        <end position="1668"/>
    </location>
</feature>
<feature type="disulfide bond" evidence="22 40 41 42">
    <location>
        <begin position="1662"/>
        <end position="1682"/>
    </location>
</feature>
<feature type="disulfide bond" evidence="22 40 41 42">
    <location>
        <begin position="1684"/>
        <end position="1698"/>
    </location>
</feature>
<feature type="mutagenesis site" description="In merozoites, loss of cell membrane localization. In the schizont, localizes to the parasitophorous vacuole lumen. Merozoite egress from host erythrocytes is impaired resulting is a severe growth reduction. Egress defect characterized by abortive erythrocyte membrane rupture and trapping of the merozoites in the partially ruptured cell." evidence="18">
    <original>DVTPSPLSVRVSGSSGSTKEETQIPTSGSLLTELQQVVQLQNYDEEDDSLVVLPIFGESEDNDEYLDQVVTGEAISVTMDNILSGFENEYDVIYLKPLAGVYRSLKKQIEKNIFTFNLNLNDILNSRLKKRKYFLDVLESDLMQFKHISSNEYIIEDSFKLLNSEQKNTLLKSYKYIKESVENDIKFAQEGISYYEKVLAKYKDDLESIKKVIKEEKEKFPSSPPTTPPSPAKTDEQKKESKFLPFLTNIETLYNNLVNKIDDYLINLKAKINDCNVEKDEAHVKITKLSDLKAIDDKIDLFKNPYDFEAIKKLINDDTKKDMLGKLLSTGLVQNFPNTIISKLIEGKFQDMLNISQHQCVKKQCPENSGCFRHLDEREECKCLLNYKQEGDKCVENPNPTCNENNGGCDADATCTEEDSGSSRKKITCECTKPDSYPLFDGIFCSSSNFLGISFLLILMLILYSFI</original>
    <variation>GK</variation>
    <location>
        <begin position="1254"/>
        <end position="1720"/>
    </location>
</feature>
<feature type="mutagenesis site" description="In merozoites, loss of cell membrane localization. In the schizont, localizes to the parasitophorous vacuole lumen. Merozoite egress from host erythrocytes is impaired resulting is a severe growth reduction." evidence="18">
    <original>IPTSGSLLTELQQVVQLQNYDEEDDSLVVLPIFGESEDNDEYLDQVVTGEAISVTMDNILSGFENEYDVIYLKPLAGVYRSLKKQIEKNIFTFNLNLNDILNSRLKKRKYFLDVLESDLMQFKHISSNEYIIEDSFKLLNSEQKNTLLKSYKYIKESVENDIKFAQEGISYYEKVLAKYKDDLESIKKVIKEEKEKFPSSPPTTPPSPAKTDEQKKESKFLPFLTNIETLYNNLVNKIDDYLINLKAKINDCNVEKDEAHVKITKLSDLKAIDDKIDLFKNPYDFEAIKKLINDDTKKDMLGKLLSTGLVQNFPNTIISKLIEGKFQDMLNISQHQCVKKQCPENSGCFRHLDEREECKCLLNYKQEGDKCVENPNPTCNENNGGCDADATCTEEDSGSSRKKITCECTKPDSYPLFDGIFCSSSNFLGISFLLILMLILYSFI</original>
    <variation>VNKKNNIQ</variation>
    <location>
        <begin position="1277"/>
        <end position="1720"/>
    </location>
</feature>
<feature type="helix" evidence="44">
    <location>
        <begin position="22"/>
        <end position="45"/>
    </location>
</feature>
<feature type="helix" evidence="44">
    <location>
        <begin position="144"/>
        <end position="157"/>
    </location>
</feature>
<feature type="helix" evidence="44">
    <location>
        <begin position="160"/>
        <end position="173"/>
    </location>
</feature>
<feature type="helix" evidence="44">
    <location>
        <begin position="176"/>
        <end position="184"/>
    </location>
</feature>
<feature type="helix" evidence="44">
    <location>
        <begin position="186"/>
        <end position="210"/>
    </location>
</feature>
<feature type="helix" evidence="44">
    <location>
        <begin position="212"/>
        <end position="214"/>
    </location>
</feature>
<feature type="helix" evidence="44">
    <location>
        <begin position="220"/>
        <end position="222"/>
    </location>
</feature>
<feature type="helix" evidence="44">
    <location>
        <begin position="226"/>
        <end position="237"/>
    </location>
</feature>
<feature type="helix" evidence="44">
    <location>
        <begin position="238"/>
        <end position="241"/>
    </location>
</feature>
<feature type="helix" evidence="44">
    <location>
        <begin position="242"/>
        <end position="246"/>
    </location>
</feature>
<feature type="helix" evidence="44">
    <location>
        <begin position="250"/>
        <end position="280"/>
    </location>
</feature>
<feature type="helix" evidence="44">
    <location>
        <begin position="287"/>
        <end position="320"/>
    </location>
</feature>
<feature type="helix" evidence="44">
    <location>
        <begin position="321"/>
        <end position="323"/>
    </location>
</feature>
<feature type="helix" evidence="44">
    <location>
        <begin position="327"/>
        <end position="337"/>
    </location>
</feature>
<feature type="helix" evidence="44">
    <location>
        <begin position="356"/>
        <end position="374"/>
    </location>
</feature>
<feature type="helix" evidence="44">
    <location>
        <begin position="381"/>
        <end position="383"/>
    </location>
</feature>
<feature type="helix" evidence="44">
    <location>
        <begin position="387"/>
        <end position="399"/>
    </location>
</feature>
<feature type="helix" evidence="44">
    <location>
        <begin position="431"/>
        <end position="442"/>
    </location>
</feature>
<feature type="strand" evidence="44">
    <location>
        <begin position="455"/>
        <end position="458"/>
    </location>
</feature>
<feature type="helix" evidence="44">
    <location>
        <begin position="461"/>
        <end position="464"/>
    </location>
</feature>
<feature type="helix" evidence="44">
    <location>
        <begin position="467"/>
        <end position="493"/>
    </location>
</feature>
<feature type="helix" evidence="44">
    <location>
        <begin position="496"/>
        <end position="521"/>
    </location>
</feature>
<feature type="helix" evidence="44">
    <location>
        <begin position="527"/>
        <end position="581"/>
    </location>
</feature>
<feature type="turn" evidence="44">
    <location>
        <begin position="582"/>
        <end position="584"/>
    </location>
</feature>
<feature type="helix" evidence="44">
    <location>
        <begin position="585"/>
        <end position="614"/>
    </location>
</feature>
<feature type="helix" evidence="44">
    <location>
        <begin position="632"/>
        <end position="665"/>
    </location>
</feature>
<feature type="strand" evidence="44">
    <location>
        <begin position="674"/>
        <end position="677"/>
    </location>
</feature>
<feature type="helix" evidence="44">
    <location>
        <begin position="683"/>
        <end position="692"/>
    </location>
</feature>
<feature type="turn" evidence="44">
    <location>
        <begin position="693"/>
        <end position="696"/>
    </location>
</feature>
<feature type="helix" evidence="44">
    <location>
        <begin position="697"/>
        <end position="709"/>
    </location>
</feature>
<feature type="helix" evidence="43">
    <location>
        <begin position="795"/>
        <end position="821"/>
    </location>
</feature>
<feature type="helix" evidence="43">
    <location>
        <begin position="826"/>
        <end position="830"/>
    </location>
</feature>
<feature type="helix" evidence="43">
    <location>
        <begin position="836"/>
        <end position="840"/>
    </location>
</feature>
<feature type="helix" evidence="43">
    <location>
        <begin position="841"/>
        <end position="843"/>
    </location>
</feature>
<feature type="helix" evidence="43">
    <location>
        <begin position="852"/>
        <end position="855"/>
    </location>
</feature>
<feature type="helix" evidence="43">
    <location>
        <begin position="858"/>
        <end position="890"/>
    </location>
</feature>
<feature type="turn" evidence="43">
    <location>
        <begin position="891"/>
        <end position="893"/>
    </location>
</feature>
<feature type="helix" evidence="43">
    <location>
        <begin position="895"/>
        <end position="904"/>
    </location>
</feature>
<feature type="strand" evidence="44">
    <location>
        <begin position="949"/>
        <end position="953"/>
    </location>
</feature>
<feature type="helix" evidence="43">
    <location>
        <begin position="964"/>
        <end position="967"/>
    </location>
</feature>
<feature type="helix" evidence="43">
    <location>
        <begin position="971"/>
        <end position="973"/>
    </location>
</feature>
<feature type="helix" evidence="43">
    <location>
        <begin position="974"/>
        <end position="978"/>
    </location>
</feature>
<feature type="helix" evidence="43">
    <location>
        <begin position="979"/>
        <end position="981"/>
    </location>
</feature>
<feature type="strand" evidence="43">
    <location>
        <begin position="991"/>
        <end position="993"/>
    </location>
</feature>
<feature type="helix" evidence="43">
    <location>
        <begin position="996"/>
        <end position="1009"/>
    </location>
</feature>
<feature type="strand" evidence="43">
    <location>
        <begin position="1010"/>
        <end position="1012"/>
    </location>
</feature>
<feature type="helix" evidence="43">
    <location>
        <begin position="1016"/>
        <end position="1024"/>
    </location>
</feature>
<feature type="helix" evidence="43">
    <location>
        <begin position="1026"/>
        <end position="1030"/>
    </location>
</feature>
<feature type="helix" evidence="43">
    <location>
        <begin position="1034"/>
        <end position="1100"/>
    </location>
</feature>
<feature type="helix" evidence="43">
    <location>
        <begin position="1107"/>
        <end position="1109"/>
    </location>
</feature>
<feature type="helix" evidence="43">
    <location>
        <begin position="1110"/>
        <end position="1145"/>
    </location>
</feature>
<feature type="turn" evidence="43">
    <location>
        <begin position="1152"/>
        <end position="1154"/>
    </location>
</feature>
<feature type="helix" evidence="43">
    <location>
        <begin position="1157"/>
        <end position="1177"/>
    </location>
</feature>
<feature type="helix" evidence="43">
    <location>
        <begin position="1179"/>
        <end position="1212"/>
    </location>
</feature>
<feature type="strand" evidence="44">
    <location>
        <begin position="1213"/>
        <end position="1215"/>
    </location>
</feature>
<feature type="helix" evidence="43">
    <location>
        <begin position="1221"/>
        <end position="1234"/>
    </location>
</feature>
<feature type="helix" evidence="43">
    <location>
        <begin position="1235"/>
        <end position="1238"/>
    </location>
</feature>
<feature type="turn" evidence="44">
    <location>
        <begin position="1342"/>
        <end position="1344"/>
    </location>
</feature>
<feature type="helix" evidence="44">
    <location>
        <begin position="1348"/>
        <end position="1391"/>
    </location>
</feature>
<feature type="helix" evidence="44">
    <location>
        <begin position="1392"/>
        <end position="1398"/>
    </location>
</feature>
<feature type="strand" evidence="44">
    <location>
        <begin position="1401"/>
        <end position="1410"/>
    </location>
</feature>
<feature type="helix" evidence="44">
    <location>
        <begin position="1411"/>
        <end position="1414"/>
    </location>
</feature>
<feature type="helix" evidence="44">
    <location>
        <begin position="1417"/>
        <end position="1472"/>
    </location>
</feature>
<feature type="helix" evidence="44">
    <location>
        <begin position="1497"/>
        <end position="1554"/>
    </location>
</feature>
<feature type="helix" evidence="46">
    <location>
        <begin position="1609"/>
        <end position="1611"/>
    </location>
</feature>
<feature type="strand" evidence="46">
    <location>
        <begin position="1622"/>
        <end position="1626"/>
    </location>
</feature>
<feature type="strand" evidence="46">
    <location>
        <begin position="1632"/>
        <end position="1636"/>
    </location>
</feature>
<feature type="strand" evidence="46">
    <location>
        <begin position="1640"/>
        <end position="1642"/>
    </location>
</feature>
<feature type="strand" evidence="46">
    <location>
        <begin position="1644"/>
        <end position="1649"/>
    </location>
</feature>
<feature type="helix" evidence="46">
    <location>
        <begin position="1658"/>
        <end position="1661"/>
    </location>
</feature>
<feature type="strand" evidence="46">
    <location>
        <begin position="1666"/>
        <end position="1671"/>
    </location>
</feature>
<feature type="strand" evidence="45">
    <location>
        <begin position="1674"/>
        <end position="1676"/>
    </location>
</feature>
<feature type="strand" evidence="46">
    <location>
        <begin position="1679"/>
        <end position="1684"/>
    </location>
</feature>
<feature type="helix" evidence="46">
    <location>
        <begin position="1693"/>
        <end position="1695"/>
    </location>
</feature>
<gene>
    <name evidence="24" type="primary">MSP1</name>
    <name evidence="26" type="synonym">MSP-1</name>
    <name evidence="30" type="ORF">PF3D7_0930300</name>
</gene>
<evidence type="ECO:0000250" key="1">
    <source>
        <dbReference type="UniProtKB" id="P13819"/>
    </source>
</evidence>
<evidence type="ECO:0000255" key="2"/>
<evidence type="ECO:0000256" key="3">
    <source>
        <dbReference type="SAM" id="MobiDB-lite"/>
    </source>
</evidence>
<evidence type="ECO:0000269" key="4">
    <source>
    </source>
</evidence>
<evidence type="ECO:0000269" key="5">
    <source>
    </source>
</evidence>
<evidence type="ECO:0000269" key="6">
    <source>
    </source>
</evidence>
<evidence type="ECO:0000269" key="7">
    <source>
    </source>
</evidence>
<evidence type="ECO:0000269" key="8">
    <source>
    </source>
</evidence>
<evidence type="ECO:0000269" key="9">
    <source>
    </source>
</evidence>
<evidence type="ECO:0000269" key="10">
    <source>
    </source>
</evidence>
<evidence type="ECO:0000269" key="11">
    <source>
    </source>
</evidence>
<evidence type="ECO:0000269" key="12">
    <source>
    </source>
</evidence>
<evidence type="ECO:0000269" key="13">
    <source>
    </source>
</evidence>
<evidence type="ECO:0000269" key="14">
    <source>
    </source>
</evidence>
<evidence type="ECO:0000269" key="15">
    <source>
    </source>
</evidence>
<evidence type="ECO:0000269" key="16">
    <source>
    </source>
</evidence>
<evidence type="ECO:0000269" key="17">
    <source>
    </source>
</evidence>
<evidence type="ECO:0000269" key="18">
    <source>
    </source>
</evidence>
<evidence type="ECO:0000269" key="19">
    <source>
    </source>
</evidence>
<evidence type="ECO:0000269" key="20">
    <source>
    </source>
</evidence>
<evidence type="ECO:0000269" key="21">
    <source>
    </source>
</evidence>
<evidence type="ECO:0000269" key="22">
    <source>
    </source>
</evidence>
<evidence type="ECO:0000303" key="23">
    <source>
    </source>
</evidence>
<evidence type="ECO:0000303" key="24">
    <source>
    </source>
</evidence>
<evidence type="ECO:0000303" key="25">
    <source>
    </source>
</evidence>
<evidence type="ECO:0000303" key="26">
    <source>
    </source>
</evidence>
<evidence type="ECO:0000303" key="27">
    <source>
    </source>
</evidence>
<evidence type="ECO:0000305" key="28"/>
<evidence type="ECO:0000305" key="29">
    <source>
    </source>
</evidence>
<evidence type="ECO:0000312" key="30">
    <source>
        <dbReference type="EMBL" id="CAD51981.1"/>
    </source>
</evidence>
<evidence type="ECO:0000312" key="31">
    <source>
        <dbReference type="Proteomes" id="UP000001450"/>
    </source>
</evidence>
<evidence type="ECO:0007744" key="32">
    <source>
        <dbReference type="PDB" id="6ZBC"/>
    </source>
</evidence>
<evidence type="ECO:0007744" key="33">
    <source>
        <dbReference type="PDB" id="6ZBD"/>
    </source>
</evidence>
<evidence type="ECO:0007744" key="34">
    <source>
        <dbReference type="PDB" id="6ZBE"/>
    </source>
</evidence>
<evidence type="ECO:0007744" key="35">
    <source>
        <dbReference type="PDB" id="6ZBF"/>
    </source>
</evidence>
<evidence type="ECO:0007744" key="36">
    <source>
        <dbReference type="PDB" id="6ZBG"/>
    </source>
</evidence>
<evidence type="ECO:0007744" key="37">
    <source>
        <dbReference type="PDB" id="6ZBH"/>
    </source>
</evidence>
<evidence type="ECO:0007744" key="38">
    <source>
        <dbReference type="PDB" id="6ZBJ"/>
    </source>
</evidence>
<evidence type="ECO:0007744" key="39">
    <source>
        <dbReference type="PDB" id="6ZBL"/>
    </source>
</evidence>
<evidence type="ECO:0007744" key="40">
    <source>
        <dbReference type="PDB" id="8DFG"/>
    </source>
</evidence>
<evidence type="ECO:0007744" key="41">
    <source>
        <dbReference type="PDB" id="8DFH"/>
    </source>
</evidence>
<evidence type="ECO:0007744" key="42">
    <source>
        <dbReference type="PDB" id="8DFI"/>
    </source>
</evidence>
<evidence type="ECO:0007829" key="43">
    <source>
        <dbReference type="PDB" id="6ZBC"/>
    </source>
</evidence>
<evidence type="ECO:0007829" key="44">
    <source>
        <dbReference type="PDB" id="6ZBJ"/>
    </source>
</evidence>
<evidence type="ECO:0007829" key="45">
    <source>
        <dbReference type="PDB" id="8DFH"/>
    </source>
</evidence>
<evidence type="ECO:0007829" key="46">
    <source>
        <dbReference type="PDB" id="8DFI"/>
    </source>
</evidence>
<sequence length="1720" mass="195726">MKIIFFLCSFLFFIINTQCVTHESYQELVKKLEALEDAVLTGYSLFQKEKMVLNEEEITTKGASAQSGASAQSGASAQSGASAQSGASAQSGASAQSGTSGPSGPSGTSPSSRSNTLPRSNTSSGASPPADASDSDAKSYADLKHRVRNYLFTIKELKYPELFDLTNHMLTLCDNIHGFKYLIDGYEEINELLYKLNFYFDLLRAKLNDVCANDYCQIPFNLKIRANELDVLKKLVFGYRKPLDNIKDNVGKMEDYIKKNKTTIANINELIEGSKKTIDQNKNADNEEGKKKLYQAQYDLSIYNKQLEEAHNLISVLEKRIDTLKKNENIKKLLDKINEIKNPPPANSGNTPNTLLDKNKKIEEHEEKIKEIAKTIKFNIDSLFTDPLELEYYLREKNKKVDVTPKSQDPTKSVQIPKVPYPNGIVYPLPLTDIHNSLAADNDKNSYGDLMNPHTKEKINEKIITDNKERKIFINNIKKKIDLEEKNINHTKEQNKKLLEDYEKSKKDYEELLEKFYEMKFNNNFNKDVVDKIFSARYTYNVEKQRYNNKFSSSNNSVYNVQKLKKALSYLEDYSLRKGISEKDFNHYYTLKTGLEADIKKLTEEIKSSENKILEKNFKGLTHSANGSLEVSDIVKLQVQKVLLIKKIEDLRKIELFLKNAQLKDSIHVPNIYKPQNKPEPYYLIVLKKEVDKLKEFIPKVKDMLKKEQAVLSSITQPLVAASETTEDGGHSTHTLSQSGETEVTEETEETEETVGHTTTVTITLPPTQPSPPKEVKVVENSIEHKSNDNSQALTKTVYLKKLDEFLTKSYICHKYILVSNSSMDQKLLEVYNLTPEEENELKSCDPLDLLFNIQNNIPAMYSLYDSMNNDLQHLFFELYQKEMIYYLHKLKEENHIKKLLEEQKQITGTSSTSSPGNTTVNTAQSATHSNSQNQQSNASSTNTQNGVAVSSGPAVVEESHDPLTVLSISNDLKGIVSLLNLGNKTKVPNPLTISTTEMEKFYENILKNNDTYFNDDIKQFVKSNSKVITGLTETQKNALNDEIKKLKDTLQLSFDLYNKYKLKLDRLFNKKKELGQDKMQIKKLTLLKEQLESKLNSLNNPHNVLQNFSVFFNKKKEAEIAETENTLENTKILLKHYKGLVKYYNGESSPLKTLSEVSIQTEDNYANLEKFRVLSKIDGKLNDNLHLGKKKLSFLSSGLHHLITELKEVIKNKNYTGNSPSENNKKVNEALKSYENFLPEAKVTTVVTPPQPDVTPSPLSVRVSGSSGSTKEETQIPTSGSLLTELQQVVQLQNYDEEDDSLVVLPIFGESEDNDEYLDQVVTGEAISVTMDNILSGFENEYDVIYLKPLAGVYRSLKKQIEKNIFTFNLNLNDILNSRLKKRKYFLDVLESDLMQFKHISSNEYIIEDSFKLLNSEQKNTLLKSYKYIKESVENDIKFAQEGISYYEKVLAKYKDDLESIKKVIKEEKEKFPSSPPTTPPSPAKTDEQKKESKFLPFLTNIETLYNNLVNKIDDYLINLKAKINDCNVEKDEAHVKITKLSDLKAIDDKIDLFKNPYDFEAIKKLINDDTKKDMLGKLLSTGLVQNFPNTIISKLIEGKFQDMLNISQHQCVKKQCPENSGCFRHLDEREECKCLLNYKQEGDKCVENPNPTCNENNGGCDADATCTEEDSGSSRKKITCECTKPDSYPLFDGIFCSSSNFLGISFLLILMLILYSFI</sequence>